<reference key="1">
    <citation type="submission" date="2009-01" db="EMBL/GenBank/DDBJ databases">
        <title>Complete sequence of Chloroflexus sp. Y-400-fl.</title>
        <authorList>
            <consortium name="US DOE Joint Genome Institute"/>
            <person name="Lucas S."/>
            <person name="Copeland A."/>
            <person name="Lapidus A."/>
            <person name="Glavina del Rio T."/>
            <person name="Dalin E."/>
            <person name="Tice H."/>
            <person name="Bruce D."/>
            <person name="Goodwin L."/>
            <person name="Pitluck S."/>
            <person name="Sims D."/>
            <person name="Kiss H."/>
            <person name="Brettin T."/>
            <person name="Detter J.C."/>
            <person name="Han C."/>
            <person name="Larimer F."/>
            <person name="Land M."/>
            <person name="Hauser L."/>
            <person name="Kyrpides N."/>
            <person name="Ovchinnikova G."/>
            <person name="Bryant D.A."/>
            <person name="Richardson P."/>
        </authorList>
    </citation>
    <scope>NUCLEOTIDE SEQUENCE [LARGE SCALE GENOMIC DNA]</scope>
    <source>
        <strain>ATCC 29364 / DSM 637 / Y-400-fl</strain>
    </source>
</reference>
<evidence type="ECO:0000255" key="1">
    <source>
        <dbReference type="HAMAP-Rule" id="MF_00518"/>
    </source>
</evidence>
<dbReference type="EC" id="3.1.1.96" evidence="1"/>
<dbReference type="EMBL" id="CP001364">
    <property type="protein sequence ID" value="ACM51920.1"/>
    <property type="molecule type" value="Genomic_DNA"/>
</dbReference>
<dbReference type="SMR" id="B9LIV8"/>
<dbReference type="KEGG" id="chl:Chy400_0482"/>
<dbReference type="HOGENOM" id="CLU_076901_1_0_0"/>
<dbReference type="OrthoDB" id="9801395at2"/>
<dbReference type="GO" id="GO:0005737">
    <property type="term" value="C:cytoplasm"/>
    <property type="evidence" value="ECO:0007669"/>
    <property type="project" value="UniProtKB-SubCell"/>
</dbReference>
<dbReference type="GO" id="GO:0051500">
    <property type="term" value="F:D-tyrosyl-tRNA(Tyr) deacylase activity"/>
    <property type="evidence" value="ECO:0007669"/>
    <property type="project" value="TreeGrafter"/>
</dbReference>
<dbReference type="GO" id="GO:0106026">
    <property type="term" value="F:Gly-tRNA(Ala) deacylase activity"/>
    <property type="evidence" value="ECO:0007669"/>
    <property type="project" value="UniProtKB-UniRule"/>
</dbReference>
<dbReference type="GO" id="GO:0043908">
    <property type="term" value="F:Ser(Gly)-tRNA(Ala) hydrolase activity"/>
    <property type="evidence" value="ECO:0007669"/>
    <property type="project" value="UniProtKB-UniRule"/>
</dbReference>
<dbReference type="GO" id="GO:0000049">
    <property type="term" value="F:tRNA binding"/>
    <property type="evidence" value="ECO:0007669"/>
    <property type="project" value="UniProtKB-UniRule"/>
</dbReference>
<dbReference type="GO" id="GO:0019478">
    <property type="term" value="P:D-amino acid catabolic process"/>
    <property type="evidence" value="ECO:0007669"/>
    <property type="project" value="UniProtKB-UniRule"/>
</dbReference>
<dbReference type="CDD" id="cd00563">
    <property type="entry name" value="Dtyr_deacylase"/>
    <property type="match status" value="1"/>
</dbReference>
<dbReference type="FunFam" id="3.50.80.10:FF:000001">
    <property type="entry name" value="D-aminoacyl-tRNA deacylase"/>
    <property type="match status" value="1"/>
</dbReference>
<dbReference type="Gene3D" id="3.50.80.10">
    <property type="entry name" value="D-tyrosyl-tRNA(Tyr) deacylase"/>
    <property type="match status" value="1"/>
</dbReference>
<dbReference type="HAMAP" id="MF_00518">
    <property type="entry name" value="Deacylase_Dtd"/>
    <property type="match status" value="1"/>
</dbReference>
<dbReference type="InterPro" id="IPR003732">
    <property type="entry name" value="Daa-tRNA_deacyls_DTD"/>
</dbReference>
<dbReference type="InterPro" id="IPR023509">
    <property type="entry name" value="DTD-like_sf"/>
</dbReference>
<dbReference type="NCBIfam" id="TIGR00256">
    <property type="entry name" value="D-aminoacyl-tRNA deacylase"/>
    <property type="match status" value="1"/>
</dbReference>
<dbReference type="PANTHER" id="PTHR10472:SF5">
    <property type="entry name" value="D-AMINOACYL-TRNA DEACYLASE 1"/>
    <property type="match status" value="1"/>
</dbReference>
<dbReference type="PANTHER" id="PTHR10472">
    <property type="entry name" value="D-TYROSYL-TRNA TYR DEACYLASE"/>
    <property type="match status" value="1"/>
</dbReference>
<dbReference type="Pfam" id="PF02580">
    <property type="entry name" value="Tyr_Deacylase"/>
    <property type="match status" value="1"/>
</dbReference>
<dbReference type="SUPFAM" id="SSF69500">
    <property type="entry name" value="DTD-like"/>
    <property type="match status" value="1"/>
</dbReference>
<feature type="chain" id="PRO_1000146188" description="D-aminoacyl-tRNA deacylase">
    <location>
        <begin position="1"/>
        <end position="160"/>
    </location>
</feature>
<feature type="short sequence motif" description="Gly-cisPro motif, important for rejection of L-amino acids" evidence="1">
    <location>
        <begin position="137"/>
        <end position="138"/>
    </location>
</feature>
<accession>B9LIV8</accession>
<sequence>MRAVIQRVREASVTVAGEVVGAIGNGLLILLGVCHTDTAEDVELLAEKIAQLRIFSDHEGKFNLSLLDVGGAALVVSQFTLYADTRKGRRPSFTAAARPEIAAPLVDAFAAALRARNIPVATGVFGAMMQVALINDGPVTLVIDSAELRLPRRAGSRVDS</sequence>
<gene>
    <name evidence="1" type="primary">dtd</name>
    <name type="ordered locus">Chy400_0482</name>
</gene>
<name>DTD_CHLSY</name>
<organism>
    <name type="scientific">Chloroflexus aurantiacus (strain ATCC 29364 / DSM 637 / Y-400-fl)</name>
    <dbReference type="NCBI Taxonomy" id="480224"/>
    <lineage>
        <taxon>Bacteria</taxon>
        <taxon>Bacillati</taxon>
        <taxon>Chloroflexota</taxon>
        <taxon>Chloroflexia</taxon>
        <taxon>Chloroflexales</taxon>
        <taxon>Chloroflexineae</taxon>
        <taxon>Chloroflexaceae</taxon>
        <taxon>Chloroflexus</taxon>
    </lineage>
</organism>
<protein>
    <recommendedName>
        <fullName evidence="1">D-aminoacyl-tRNA deacylase</fullName>
        <shortName evidence="1">DTD</shortName>
        <ecNumber evidence="1">3.1.1.96</ecNumber>
    </recommendedName>
    <alternativeName>
        <fullName evidence="1">Gly-tRNA(Ala) deacylase</fullName>
    </alternativeName>
</protein>
<proteinExistence type="inferred from homology"/>
<keyword id="KW-0963">Cytoplasm</keyword>
<keyword id="KW-0378">Hydrolase</keyword>
<keyword id="KW-0694">RNA-binding</keyword>
<keyword id="KW-0820">tRNA-binding</keyword>
<comment type="function">
    <text evidence="1">An aminoacyl-tRNA editing enzyme that deacylates mischarged D-aminoacyl-tRNAs. Also deacylates mischarged glycyl-tRNA(Ala), protecting cells against glycine mischarging by AlaRS. Acts via tRNA-based rather than protein-based catalysis; rejects L-amino acids rather than detecting D-amino acids in the active site. By recycling D-aminoacyl-tRNA to D-amino acids and free tRNA molecules, this enzyme counteracts the toxicity associated with the formation of D-aminoacyl-tRNA entities in vivo and helps enforce protein L-homochirality.</text>
</comment>
<comment type="catalytic activity">
    <reaction evidence="1">
        <text>glycyl-tRNA(Ala) + H2O = tRNA(Ala) + glycine + H(+)</text>
        <dbReference type="Rhea" id="RHEA:53744"/>
        <dbReference type="Rhea" id="RHEA-COMP:9657"/>
        <dbReference type="Rhea" id="RHEA-COMP:13640"/>
        <dbReference type="ChEBI" id="CHEBI:15377"/>
        <dbReference type="ChEBI" id="CHEBI:15378"/>
        <dbReference type="ChEBI" id="CHEBI:57305"/>
        <dbReference type="ChEBI" id="CHEBI:78442"/>
        <dbReference type="ChEBI" id="CHEBI:78522"/>
        <dbReference type="EC" id="3.1.1.96"/>
    </reaction>
</comment>
<comment type="catalytic activity">
    <reaction evidence="1">
        <text>a D-aminoacyl-tRNA + H2O = a tRNA + a D-alpha-amino acid + H(+)</text>
        <dbReference type="Rhea" id="RHEA:13953"/>
        <dbReference type="Rhea" id="RHEA-COMP:10123"/>
        <dbReference type="Rhea" id="RHEA-COMP:10124"/>
        <dbReference type="ChEBI" id="CHEBI:15377"/>
        <dbReference type="ChEBI" id="CHEBI:15378"/>
        <dbReference type="ChEBI" id="CHEBI:59871"/>
        <dbReference type="ChEBI" id="CHEBI:78442"/>
        <dbReference type="ChEBI" id="CHEBI:79333"/>
        <dbReference type="EC" id="3.1.1.96"/>
    </reaction>
</comment>
<comment type="subunit">
    <text evidence="1">Homodimer.</text>
</comment>
<comment type="subcellular location">
    <subcellularLocation>
        <location evidence="1">Cytoplasm</location>
    </subcellularLocation>
</comment>
<comment type="domain">
    <text evidence="1">A Gly-cisPro motif from one monomer fits into the active site of the other monomer to allow specific chiral rejection of L-amino acids.</text>
</comment>
<comment type="similarity">
    <text evidence="1">Belongs to the DTD family.</text>
</comment>